<evidence type="ECO:0000255" key="1">
    <source>
        <dbReference type="HAMAP-Rule" id="MF_01351"/>
    </source>
</evidence>
<dbReference type="EC" id="7.1.1.-" evidence="1"/>
<dbReference type="EMBL" id="DQ424856">
    <property type="protein sequence ID" value="ABE47589.1"/>
    <property type="molecule type" value="Genomic_DNA"/>
</dbReference>
<dbReference type="RefSeq" id="YP_567132.1">
    <property type="nucleotide sequence ID" value="NC_007957.1"/>
</dbReference>
<dbReference type="SMR" id="Q0ZIW4"/>
<dbReference type="FunCoup" id="Q0ZIW4">
    <property type="interactions" value="61"/>
</dbReference>
<dbReference type="STRING" id="29760.Q0ZIW4"/>
<dbReference type="EnsemblPlants" id="Vitvi08g04019_t001">
    <property type="protein sequence ID" value="Vitvi08g04019_P001"/>
    <property type="gene ID" value="Vitvi08g04019"/>
</dbReference>
<dbReference type="GeneID" id="4025043"/>
<dbReference type="Gramene" id="Vitvi08g04019_t001">
    <property type="protein sequence ID" value="Vitvi08g04019_P001"/>
    <property type="gene ID" value="Vitvi08g04019"/>
</dbReference>
<dbReference type="KEGG" id="vvi:4025043"/>
<dbReference type="InParanoid" id="Q0ZIW4"/>
<dbReference type="OrthoDB" id="24758at2759"/>
<dbReference type="Proteomes" id="UP000009183">
    <property type="component" value="Chloroplast"/>
</dbReference>
<dbReference type="GO" id="GO:0009535">
    <property type="term" value="C:chloroplast thylakoid membrane"/>
    <property type="evidence" value="ECO:0007669"/>
    <property type="project" value="UniProtKB-SubCell"/>
</dbReference>
<dbReference type="GO" id="GO:0051539">
    <property type="term" value="F:4 iron, 4 sulfur cluster binding"/>
    <property type="evidence" value="ECO:0007669"/>
    <property type="project" value="UniProtKB-KW"/>
</dbReference>
<dbReference type="GO" id="GO:0005506">
    <property type="term" value="F:iron ion binding"/>
    <property type="evidence" value="ECO:0007669"/>
    <property type="project" value="UniProtKB-UniRule"/>
</dbReference>
<dbReference type="GO" id="GO:0008137">
    <property type="term" value="F:NADH dehydrogenase (ubiquinone) activity"/>
    <property type="evidence" value="ECO:0007669"/>
    <property type="project" value="InterPro"/>
</dbReference>
<dbReference type="GO" id="GO:0048038">
    <property type="term" value="F:quinone binding"/>
    <property type="evidence" value="ECO:0007669"/>
    <property type="project" value="UniProtKB-KW"/>
</dbReference>
<dbReference type="GO" id="GO:0019684">
    <property type="term" value="P:photosynthesis, light reaction"/>
    <property type="evidence" value="ECO:0007669"/>
    <property type="project" value="UniProtKB-UniRule"/>
</dbReference>
<dbReference type="FunFam" id="3.30.70.3270:FF:000006">
    <property type="entry name" value="NAD(P)H-quinone oxidoreductase subunit I, chloroplastic"/>
    <property type="match status" value="1"/>
</dbReference>
<dbReference type="Gene3D" id="3.30.70.3270">
    <property type="match status" value="1"/>
</dbReference>
<dbReference type="HAMAP" id="MF_01351">
    <property type="entry name" value="NDH1_NuoI"/>
    <property type="match status" value="1"/>
</dbReference>
<dbReference type="InterPro" id="IPR017896">
    <property type="entry name" value="4Fe4S_Fe-S-bd"/>
</dbReference>
<dbReference type="InterPro" id="IPR017900">
    <property type="entry name" value="4Fe4S_Fe_S_CS"/>
</dbReference>
<dbReference type="InterPro" id="IPR010226">
    <property type="entry name" value="NADH_quinone_OxRdtase_chainI"/>
</dbReference>
<dbReference type="InterPro" id="IPR004497">
    <property type="entry name" value="NDHI"/>
</dbReference>
<dbReference type="NCBIfam" id="TIGR00403">
    <property type="entry name" value="ndhI"/>
    <property type="match status" value="1"/>
</dbReference>
<dbReference type="NCBIfam" id="TIGR01971">
    <property type="entry name" value="NuoI"/>
    <property type="match status" value="1"/>
</dbReference>
<dbReference type="NCBIfam" id="NF004537">
    <property type="entry name" value="PRK05888.1-3"/>
    <property type="match status" value="1"/>
</dbReference>
<dbReference type="PANTHER" id="PTHR47275">
    <property type="entry name" value="NAD(P)H-QUINONE OXIDOREDUCTASE SUBUNIT I, CHLOROPLASTIC"/>
    <property type="match status" value="1"/>
</dbReference>
<dbReference type="PANTHER" id="PTHR47275:SF1">
    <property type="entry name" value="NAD(P)H-QUINONE OXIDOREDUCTASE SUBUNIT I, CHLOROPLASTIC"/>
    <property type="match status" value="1"/>
</dbReference>
<dbReference type="Pfam" id="PF13187">
    <property type="entry name" value="Fer4_9"/>
    <property type="match status" value="1"/>
</dbReference>
<dbReference type="SUPFAM" id="SSF54862">
    <property type="entry name" value="4Fe-4S ferredoxins"/>
    <property type="match status" value="1"/>
</dbReference>
<dbReference type="PROSITE" id="PS00198">
    <property type="entry name" value="4FE4S_FER_1"/>
    <property type="match status" value="2"/>
</dbReference>
<dbReference type="PROSITE" id="PS51379">
    <property type="entry name" value="4FE4S_FER_2"/>
    <property type="match status" value="2"/>
</dbReference>
<comment type="function">
    <text evidence="1">NDH shuttles electrons from NAD(P)H:plastoquinone, via FMN and iron-sulfur (Fe-S) centers, to quinones in the photosynthetic chain and possibly in a chloroplast respiratory chain. The immediate electron acceptor for the enzyme in this species is believed to be plastoquinone. Couples the redox reaction to proton translocation, and thus conserves the redox energy in a proton gradient.</text>
</comment>
<comment type="catalytic activity">
    <reaction evidence="1">
        <text>a plastoquinone + NADH + (n+1) H(+)(in) = a plastoquinol + NAD(+) + n H(+)(out)</text>
        <dbReference type="Rhea" id="RHEA:42608"/>
        <dbReference type="Rhea" id="RHEA-COMP:9561"/>
        <dbReference type="Rhea" id="RHEA-COMP:9562"/>
        <dbReference type="ChEBI" id="CHEBI:15378"/>
        <dbReference type="ChEBI" id="CHEBI:17757"/>
        <dbReference type="ChEBI" id="CHEBI:57540"/>
        <dbReference type="ChEBI" id="CHEBI:57945"/>
        <dbReference type="ChEBI" id="CHEBI:62192"/>
    </reaction>
</comment>
<comment type="catalytic activity">
    <reaction evidence="1">
        <text>a plastoquinone + NADPH + (n+1) H(+)(in) = a plastoquinol + NADP(+) + n H(+)(out)</text>
        <dbReference type="Rhea" id="RHEA:42612"/>
        <dbReference type="Rhea" id="RHEA-COMP:9561"/>
        <dbReference type="Rhea" id="RHEA-COMP:9562"/>
        <dbReference type="ChEBI" id="CHEBI:15378"/>
        <dbReference type="ChEBI" id="CHEBI:17757"/>
        <dbReference type="ChEBI" id="CHEBI:57783"/>
        <dbReference type="ChEBI" id="CHEBI:58349"/>
        <dbReference type="ChEBI" id="CHEBI:62192"/>
    </reaction>
</comment>
<comment type="cofactor">
    <cofactor evidence="1">
        <name>[4Fe-4S] cluster</name>
        <dbReference type="ChEBI" id="CHEBI:49883"/>
    </cofactor>
    <text evidence="1">Binds 2 [4Fe-4S] clusters per subunit.</text>
</comment>
<comment type="subunit">
    <text evidence="1">NDH is composed of at least 16 different subunits, 5 of which are encoded in the nucleus.</text>
</comment>
<comment type="subcellular location">
    <subcellularLocation>
        <location evidence="1">Plastid</location>
        <location evidence="1">Chloroplast thylakoid membrane</location>
        <topology evidence="1">Peripheral membrane protein</topology>
    </subcellularLocation>
</comment>
<comment type="similarity">
    <text evidence="1">Belongs to the complex I 23 kDa subunit family.</text>
</comment>
<gene>
    <name evidence="1" type="primary">ndhI</name>
</gene>
<organism>
    <name type="scientific">Vitis vinifera</name>
    <name type="common">Grape</name>
    <dbReference type="NCBI Taxonomy" id="29760"/>
    <lineage>
        <taxon>Eukaryota</taxon>
        <taxon>Viridiplantae</taxon>
        <taxon>Streptophyta</taxon>
        <taxon>Embryophyta</taxon>
        <taxon>Tracheophyta</taxon>
        <taxon>Spermatophyta</taxon>
        <taxon>Magnoliopsida</taxon>
        <taxon>eudicotyledons</taxon>
        <taxon>Gunneridae</taxon>
        <taxon>Pentapetalae</taxon>
        <taxon>rosids</taxon>
        <taxon>Vitales</taxon>
        <taxon>Vitaceae</taxon>
        <taxon>Viteae</taxon>
        <taxon>Vitis</taxon>
    </lineage>
</organism>
<name>NDHI_VITVI</name>
<proteinExistence type="inferred from homology"/>
<protein>
    <recommendedName>
        <fullName evidence="1">NAD(P)H-quinone oxidoreductase subunit I, chloroplastic</fullName>
        <ecNumber evidence="1">7.1.1.-</ecNumber>
    </recommendedName>
    <alternativeName>
        <fullName evidence="1">NAD(P)H dehydrogenase subunit I</fullName>
        <shortName evidence="1">NDH subunit I</shortName>
    </alternativeName>
    <alternativeName>
        <fullName evidence="1">NADH-plastoquinone oxidoreductase subunit I</fullName>
    </alternativeName>
</protein>
<reference key="1">
    <citation type="journal article" date="2006" name="BMC Evol. Biol.">
        <title>Phylogenetic analyses of Vitis (Vitaceae) based on complete chloroplast genome sequences: effects of taxon sampling and phylogenetic methods on resolving relationships among rosids.</title>
        <authorList>
            <person name="Jansen R.K."/>
            <person name="Kaittanis C."/>
            <person name="Lee S.-B."/>
            <person name="Saski C."/>
            <person name="Tomkins J."/>
            <person name="Alverson A.J."/>
            <person name="Daniell H."/>
        </authorList>
    </citation>
    <scope>NUCLEOTIDE SEQUENCE [LARGE SCALE GENOMIC DNA]</scope>
    <source>
        <strain>cv. Maxxa</strain>
    </source>
</reference>
<geneLocation type="chloroplast"/>
<feature type="chain" id="PRO_0000250866" description="NAD(P)H-quinone oxidoreductase subunit I, chloroplastic">
    <location>
        <begin position="1"/>
        <end position="167"/>
    </location>
</feature>
<feature type="domain" description="4Fe-4S ferredoxin-type 1" evidence="1">
    <location>
        <begin position="55"/>
        <end position="84"/>
    </location>
</feature>
<feature type="domain" description="4Fe-4S ferredoxin-type 2" evidence="1">
    <location>
        <begin position="95"/>
        <end position="124"/>
    </location>
</feature>
<feature type="binding site" evidence="1">
    <location>
        <position position="64"/>
    </location>
    <ligand>
        <name>[4Fe-4S] cluster</name>
        <dbReference type="ChEBI" id="CHEBI:49883"/>
        <label>1</label>
    </ligand>
</feature>
<feature type="binding site" evidence="1">
    <location>
        <position position="67"/>
    </location>
    <ligand>
        <name>[4Fe-4S] cluster</name>
        <dbReference type="ChEBI" id="CHEBI:49883"/>
        <label>1</label>
    </ligand>
</feature>
<feature type="binding site" evidence="1">
    <location>
        <position position="70"/>
    </location>
    <ligand>
        <name>[4Fe-4S] cluster</name>
        <dbReference type="ChEBI" id="CHEBI:49883"/>
        <label>1</label>
    </ligand>
</feature>
<feature type="binding site" evidence="1">
    <location>
        <position position="74"/>
    </location>
    <ligand>
        <name>[4Fe-4S] cluster</name>
        <dbReference type="ChEBI" id="CHEBI:49883"/>
        <label>2</label>
    </ligand>
</feature>
<feature type="binding site" evidence="1">
    <location>
        <position position="104"/>
    </location>
    <ligand>
        <name>[4Fe-4S] cluster</name>
        <dbReference type="ChEBI" id="CHEBI:49883"/>
        <label>2</label>
    </ligand>
</feature>
<feature type="binding site" evidence="1">
    <location>
        <position position="107"/>
    </location>
    <ligand>
        <name>[4Fe-4S] cluster</name>
        <dbReference type="ChEBI" id="CHEBI:49883"/>
        <label>2</label>
    </ligand>
</feature>
<feature type="binding site" evidence="1">
    <location>
        <position position="110"/>
    </location>
    <ligand>
        <name>[4Fe-4S] cluster</name>
        <dbReference type="ChEBI" id="CHEBI:49883"/>
        <label>2</label>
    </ligand>
</feature>
<feature type="binding site" evidence="1">
    <location>
        <position position="114"/>
    </location>
    <ligand>
        <name>[4Fe-4S] cluster</name>
        <dbReference type="ChEBI" id="CHEBI:49883"/>
        <label>1</label>
    </ligand>
</feature>
<sequence>MFPMVTGFMNYGQQTVRAARYIGQSFMITLSHANRLPVTIQYPYEKLITSERFRGRIHFEFDKCIACEVCVRVCPIDLPVVDWKLETDIRKKQLLNYSIDFGICIFCGNCVEYCPTNCLSMTEEYELSTYDRHELNYNQIALGRLPMSVIDDYTIRTILNSPQITSE</sequence>
<accession>Q0ZIW4</accession>
<keyword id="KW-0004">4Fe-4S</keyword>
<keyword id="KW-0150">Chloroplast</keyword>
<keyword id="KW-0408">Iron</keyword>
<keyword id="KW-0411">Iron-sulfur</keyword>
<keyword id="KW-0472">Membrane</keyword>
<keyword id="KW-0479">Metal-binding</keyword>
<keyword id="KW-0520">NAD</keyword>
<keyword id="KW-0521">NADP</keyword>
<keyword id="KW-0934">Plastid</keyword>
<keyword id="KW-0618">Plastoquinone</keyword>
<keyword id="KW-0874">Quinone</keyword>
<keyword id="KW-1185">Reference proteome</keyword>
<keyword id="KW-0677">Repeat</keyword>
<keyword id="KW-0793">Thylakoid</keyword>
<keyword id="KW-1278">Translocase</keyword>